<name>SMC3_HUMAN</name>
<sequence length="1217" mass="141542">MYIKQVIIQGFRSYRDQTIVDPFSSKHNVIVGRNGSGKSNFFYAIQFVLSDEFSHLRPEQRLALLHEGTGPRVISAFVEIIFDNSDNRLPIDKEEVSLRRVIGAKKDQYFLDKKMVTKNDVMNLLESAGFSRSNPYYIVKQGKINQMATAPDSQRLKLLREVAGTRVYDERKEESISLMKETEGKREKINELLKYIEERLHTLEEEKEELAQYQKWDKMRRALEYTIYNQELNETRAKLDELSAKRETSGEKSRQLRDAQQDARDKMEDIERQVRELKTKISAMKEEKEQLSAERQEQIKQRTKLELKAKDLQDELAGNSEQRKRLLKERQKLLEKIEEKQKELAETEPKFNSVKEKEERGIARLAQATQERTDLYAKQGRGSQFTSKEERDKWIKKELKSLDQAINDKKRQIAAIHKDLEDTEANKEKNLEQYNKLDQDLNEVKARVEELDRKYYEVKNKKDELQSERNYLWREENAEQQALAAKREDLEKKQQLLRAATGKAILNGIDSINKVLDHFRRKGINQHVQNGYHGIVMNNFECEPAFYTCVEVTAGNRLFYHIVDSDEVSTKILMEFNKMNLPGEVTFLPLNKLDVRDTAYPETNDAIPMISKLRYNPRFDKAFKHVFGKTLICRSMEVSTQLARAFTMDCITLEGDQVSHRGALTGGYYDTRKSRLELQKDVRKAEEELGELEAKLNENLRRNIERINNEIDQLMNQMQQIETQQRKFKASRDSILSEMKMLKEKRQQSEKTFMPKQRSLQSLEASLHAMESTRESLKAELGTDLLSQLSLEDQKRVDALNDEIRQLQQENRQLLNERIKLEGIITRVETYLNENLRKRLDQVEQELNELRETEGGTVLTATTSELEAINKRVKDTMARSEDLDNSIDKTEAGIKELQKSMERWKNMEKEHMDAINHDTKELEKMTNRQGMLLKKKEECMKKIRELGSLPQEAFEKYQTLSLKQLFRKLEQCNTELKKYSHVNKKALDQFVNFSEQKEKLIKRQEELDRGYKSIMELMNVLELRKYEAIQLTFKQVSKNFSEVFQKLVPGGKATLVMKKGDVEGSQSQDEGEGSGESERGSGSQSSVPSVDQFTGVGIRVSFTGKQGEMREMQQLSGGQKSLVALALIFAIQKCDPAPFYLFDEIDQALDAQHRKAVSDMIMELAVHAQFITTTFRPELLESADKFYGVKFRNKVSHIDVITAEMAKDFVEDDTTHG</sequence>
<proteinExistence type="evidence at protein level"/>
<accession>Q9UQE7</accession>
<accession>A8K156</accession>
<accession>O60464</accession>
<accession>Q5T482</accession>
<evidence type="ECO:0000250" key="1"/>
<evidence type="ECO:0000250" key="2">
    <source>
        <dbReference type="UniProtKB" id="O97594"/>
    </source>
</evidence>
<evidence type="ECO:0000250" key="3">
    <source>
        <dbReference type="UniProtKB" id="P97690"/>
    </source>
</evidence>
<evidence type="ECO:0000250" key="4">
    <source>
        <dbReference type="UniProtKB" id="Q9CW03"/>
    </source>
</evidence>
<evidence type="ECO:0000255" key="5"/>
<evidence type="ECO:0000256" key="6">
    <source>
        <dbReference type="SAM" id="MobiDB-lite"/>
    </source>
</evidence>
<evidence type="ECO:0000269" key="7">
    <source>
    </source>
</evidence>
<evidence type="ECO:0000269" key="8">
    <source>
    </source>
</evidence>
<evidence type="ECO:0000269" key="9">
    <source>
    </source>
</evidence>
<evidence type="ECO:0000269" key="10">
    <source>
    </source>
</evidence>
<evidence type="ECO:0000269" key="11">
    <source>
    </source>
</evidence>
<evidence type="ECO:0000269" key="12">
    <source>
    </source>
</evidence>
<evidence type="ECO:0000269" key="13">
    <source>
    </source>
</evidence>
<evidence type="ECO:0000269" key="14">
    <source>
    </source>
</evidence>
<evidence type="ECO:0000269" key="15">
    <source>
    </source>
</evidence>
<evidence type="ECO:0000269" key="16">
    <source>
    </source>
</evidence>
<evidence type="ECO:0000269" key="17">
    <source>
    </source>
</evidence>
<evidence type="ECO:0000269" key="18">
    <source>
    </source>
</evidence>
<evidence type="ECO:0000269" key="19">
    <source>
    </source>
</evidence>
<evidence type="ECO:0000269" key="20">
    <source>
    </source>
</evidence>
<evidence type="ECO:0000269" key="21">
    <source>
    </source>
</evidence>
<evidence type="ECO:0000269" key="22">
    <source>
    </source>
</evidence>
<evidence type="ECO:0000305" key="23"/>
<evidence type="ECO:0007744" key="24">
    <source>
        <dbReference type="PDB" id="6WG3"/>
    </source>
</evidence>
<evidence type="ECO:0007744" key="25">
    <source>
        <dbReference type="PDB" id="6WG4"/>
    </source>
</evidence>
<evidence type="ECO:0007744" key="26">
    <source>
        <dbReference type="PDB" id="6WG6"/>
    </source>
</evidence>
<evidence type="ECO:0007744" key="27">
    <source>
        <dbReference type="PDB" id="6WGE"/>
    </source>
</evidence>
<evidence type="ECO:0007744" key="28">
    <source>
    </source>
</evidence>
<evidence type="ECO:0007744" key="29">
    <source>
    </source>
</evidence>
<evidence type="ECO:0007744" key="30">
    <source>
    </source>
</evidence>
<evidence type="ECO:0007744" key="31">
    <source>
    </source>
</evidence>
<evidence type="ECO:0007744" key="32">
    <source>
    </source>
</evidence>
<evidence type="ECO:0007744" key="33">
    <source>
    </source>
</evidence>
<evidence type="ECO:0007744" key="34">
    <source>
    </source>
</evidence>
<evidence type="ECO:0007829" key="35">
    <source>
        <dbReference type="PDB" id="6WG4"/>
    </source>
</evidence>
<evidence type="ECO:0007829" key="36">
    <source>
        <dbReference type="PDB" id="8ROH"/>
    </source>
</evidence>
<evidence type="ECO:0007829" key="37">
    <source>
        <dbReference type="PDB" id="8ROI"/>
    </source>
</evidence>
<evidence type="ECO:0007829" key="38">
    <source>
        <dbReference type="PDB" id="8ROJ"/>
    </source>
</evidence>
<evidence type="ECO:0007829" key="39">
    <source>
        <dbReference type="PDB" id="8ROK"/>
    </source>
</evidence>
<comment type="function">
    <text evidence="7 16">Central component of cohesin, a complex required for chromosome cohesion during the cell cycle. The cohesin complex may form a large proteinaceous ring within which sister chromatids can be trapped. At anaphase, the complex is cleaved and dissociates from chromatin, allowing sister chromatids to segregate. Cohesion is coupled to DNA replication and is involved in DNA repair. The cohesin complex also plays an important role in spindle pole assembly during mitosis and in chromosomes movement.</text>
</comment>
<comment type="subunit">
    <text evidence="2 3 4 7 8 9 10 11 12 16 17 21 22">Forms a heterodimer with SMC1A or SMC1B in cohesin complexes (PubMed:22628566). Cohesin complexes are composed of the SMC1 (SMC1A or SMC1B) and SMC3 heterodimer attached via their SMC hinge domain, RAD21 which link them, and one STAG protein (STAG1, STAG2 or STAG3), which interacts with RAD21 (PubMed:32409525). Also found in meiosis-specific cohesin complexes (PubMed:11076961). Found in a complex with SMC1A, CDCA5 and RAD21, PDS5A/SCC-112 and PDS5B/APRIN (PubMed:15837422). Interacts with NUMA1, and forms a ternary complex with KIF3B and KIFAP3, suggesting a function in tethering the chromosomes to the spindle pole and in chromosome movement (PubMed:11590136, PubMed:9506951). Interacts with PDS5A and WAPL; regulated by SMC3 acetylation (PubMed:19907496). Interacts (via SMC hinge domain) with KIAA1328 (via N- and C-terminal domains) (PubMed:15656913). Interacts with DDX11 (PubMed:17105772). Found in a cohesin complex with SMC1A, STAG1 and RAD21 (PubMed:22628566). The cohesin complex interacts with the cohesin loading complex subunits NIPBL/Scc2 (via HEAT repeats) and MAU2/Scc4 (PubMed:22628566). NIPBL directly contacts all members of the complex, RAD21, SMC1A/B, SMC3 and STAG1 (PubMed:22628566, PubMed:32409525). Interacts with MXI1, MXD3, MXD4, SYCP2, RPGR and STAG3 (By similarity). Interacts with the NuRD complex component HDAC2; the interaction is direct (PubMed:12198550).</text>
</comment>
<comment type="interaction">
    <interactant intactId="EBI-80718">
        <id>Q9UQE7</id>
    </interactant>
    <interactant intactId="EBI-749378">
        <id>Q9BTE3</id>
        <label>MCMBP</label>
    </interactant>
    <organismsDiffer>false</organismsDiffer>
    <experiments>6</experiments>
</comment>
<comment type="interaction">
    <interactant intactId="EBI-80718">
        <id>Q9UQE7</id>
    </interactant>
    <interactant intactId="EBI-1175454">
        <id>Q29RF7</id>
        <label>PDS5A</label>
    </interactant>
    <organismsDiffer>false</organismsDiffer>
    <experiments>4</experiments>
</comment>
<comment type="interaction">
    <interactant intactId="EBI-80718">
        <id>Q9UQE7</id>
    </interactant>
    <interactant intactId="EBI-1175604">
        <id>Q9NTI5</id>
        <label>PDS5B</label>
    </interactant>
    <organismsDiffer>false</organismsDiffer>
    <experiments>7</experiments>
</comment>
<comment type="interaction">
    <interactant intactId="EBI-80718">
        <id>Q9UQE7</id>
    </interactant>
    <interactant intactId="EBI-80739">
        <id>O60216</id>
        <label>RAD21</label>
    </interactant>
    <organismsDiffer>false</organismsDiffer>
    <experiments>18</experiments>
</comment>
<comment type="interaction">
    <interactant intactId="EBI-80718">
        <id>Q9UQE7</id>
    </interactant>
    <interactant intactId="EBI-80690">
        <id>Q14683</id>
        <label>SMC1A</label>
    </interactant>
    <organismsDiffer>false</organismsDiffer>
    <experiments>15</experiments>
</comment>
<comment type="interaction">
    <interactant intactId="EBI-80718">
        <id>Q9UQE7</id>
    </interactant>
    <interactant intactId="EBI-1175097">
        <id>Q8WVM7</id>
        <label>STAG1</label>
    </interactant>
    <organismsDiffer>false</organismsDiffer>
    <experiments>14</experiments>
</comment>
<comment type="interaction">
    <interactant intactId="EBI-80718">
        <id>Q9UQE7</id>
    </interactant>
    <interactant intactId="EBI-1057252">
        <id>Q8N3U4</id>
        <label>STAG2</label>
    </interactant>
    <organismsDiffer>false</organismsDiffer>
    <experiments>18</experiments>
</comment>
<comment type="interaction">
    <interactant intactId="EBI-80718">
        <id>Q9UQE7</id>
    </interactant>
    <interactant intactId="EBI-17402">
        <id>P32908</id>
        <label>SMC1</label>
    </interactant>
    <organismsDiffer>true</organismsDiffer>
    <experiments>4</experiments>
</comment>
<comment type="subcellular location">
    <subcellularLocation>
        <location evidence="4">Nucleus</location>
    </subcellularLocation>
    <subcellularLocation>
        <location evidence="4">Chromosome</location>
    </subcellularLocation>
    <subcellularLocation>
        <location evidence="4">Chromosome</location>
        <location evidence="4">Centromere</location>
    </subcellularLocation>
    <text evidence="4">Associates with chromatin. Before prophase it is scattered along chromosome arms. During prophase, most of cohesin complexes dissociate from chromatin probably because of phosphorylation by PLK, except at centromeres, where cohesin complexes remain. At anaphase, the RAD21 subunit of the cohesin complex is cleaved, leading to the dissociation of the complex from chromosomes, allowing chromosome separation. The phosphorylated form at Ser-1083 is preferentially associated with unsynapsed chromosomal regions (By similarity).</text>
</comment>
<comment type="domain">
    <text evidence="1">The flexible SMC hinge domain, which separates the large intramolecular coiled coil regions, allows the heterotypic interaction with the corresponding domain of SMC1A or SMC1B, forming a V-shaped heterodimer. The two heads of the heterodimer are then connected by different ends of the cleavable RAD21 protein, forming a ring structure (By similarity).</text>
</comment>
<comment type="PTM">
    <text evidence="20">Ubiquitinated by the DCX(DCAF15) complex, leading to its degradation.</text>
</comment>
<comment type="PTM">
    <text evidence="4">Phosphorylated at Ser-1083 in a SPO11-dependent manner.</text>
</comment>
<comment type="PTM">
    <text evidence="14 16 18">Acetylation at Lys-105 and Lys-106 by ESCO1 is important for genome stability and S phase sister chromatid cohesion. Regulated by DSCC1, it is required for processive DNA synthesis, coupling sister chromatid cohesion establishment during S phase to DNA replication. Deacetylation by HDAC8, regulates release of the cohesin complex from chromatin.</text>
</comment>
<comment type="disease" evidence="13 15 19">
    <disease id="DI-01432">
        <name>Cornelia de Lange syndrome 3 with or without midline brain defects</name>
        <acronym>CDLS3</acronym>
        <description>A form of Cornelia de Lange syndrome, a clinically heterogeneous developmental disorder associated with malformations affecting multiple systems. Characterized by facial dysmorphisms, abnormal hands and feet, growth delay, cognitive retardation, hirsutism, gastroesophageal dysfunction and cardiac, ophthalmologic and genitourinary anomalies. Cornelia de Lange syndrome type 3 is a mild form with absence of major structural anomalies. The phenotype in some instances approaches that of apparently non-syndromic intellectual disability.</description>
        <dbReference type="MIM" id="610759"/>
    </disease>
    <text>The disease is caused by variants affecting the gene represented in this entry.</text>
</comment>
<comment type="miscellaneous">
    <text>Mutated Cornelia de Lange cell lines display genomic instability and sensitivity to ionizing radiation and interstrand cross-linking agents.</text>
</comment>
<comment type="similarity">
    <text evidence="23">Belongs to the SMC family. SMC3 subfamily.</text>
</comment>
<comment type="caution">
    <text evidence="23">Was originally isolated as a proteoglycan protein (explaining its name). Although not excluded, such secreted function is not clear.</text>
</comment>
<comment type="sequence caution" evidence="23">
    <conflict type="frameshift">
        <sequence resource="EMBL-CDS" id="AAD32447"/>
    </conflict>
</comment>
<keyword id="KW-0002">3D-structure</keyword>
<keyword id="KW-0007">Acetylation</keyword>
<keyword id="KW-0067">ATP-binding</keyword>
<keyword id="KW-0131">Cell cycle</keyword>
<keyword id="KW-0132">Cell division</keyword>
<keyword id="KW-0137">Centromere</keyword>
<keyword id="KW-0158">Chromosome</keyword>
<keyword id="KW-0175">Coiled coil</keyword>
<keyword id="KW-0903">Direct protein sequencing</keyword>
<keyword id="KW-0225">Disease variant</keyword>
<keyword id="KW-0227">DNA damage</keyword>
<keyword id="KW-0234">DNA repair</keyword>
<keyword id="KW-0991">Intellectual disability</keyword>
<keyword id="KW-0469">Meiosis</keyword>
<keyword id="KW-0498">Mitosis</keyword>
<keyword id="KW-0547">Nucleotide-binding</keyword>
<keyword id="KW-0539">Nucleus</keyword>
<keyword id="KW-0597">Phosphoprotein</keyword>
<keyword id="KW-1267">Proteomics identification</keyword>
<keyword id="KW-1185">Reference proteome</keyword>
<keyword id="KW-0832">Ubl conjugation</keyword>
<reference key="1">
    <citation type="journal article" date="1998" name="J. Biol. Chem.">
        <title>Complex formation of SMAP/KAP3, a KIF3A/B ATPase motor-associated protein, with a human chromosome-associated polypeptide.</title>
        <authorList>
            <person name="Shimizu K."/>
            <person name="Shirataki H."/>
            <person name="Honda T."/>
            <person name="Minami S."/>
            <person name="Takai Y."/>
        </authorList>
    </citation>
    <scope>NUCLEOTIDE SEQUENCE [MRNA]</scope>
    <scope>INTERACTION WITH KIFAP3</scope>
    <scope>IDENTIFICATION IN A COMPLEX WITH KIFAP3 AND KIF3B</scope>
    <source>
        <tissue>B-cell</tissue>
    </source>
</reference>
<reference key="2">
    <citation type="journal article" date="2004" name="Nat. Genet.">
        <title>Complete sequencing and characterization of 21,243 full-length human cDNAs.</title>
        <authorList>
            <person name="Ota T."/>
            <person name="Suzuki Y."/>
            <person name="Nishikawa T."/>
            <person name="Otsuki T."/>
            <person name="Sugiyama T."/>
            <person name="Irie R."/>
            <person name="Wakamatsu A."/>
            <person name="Hayashi K."/>
            <person name="Sato H."/>
            <person name="Nagai K."/>
            <person name="Kimura K."/>
            <person name="Makita H."/>
            <person name="Sekine M."/>
            <person name="Obayashi M."/>
            <person name="Nishi T."/>
            <person name="Shibahara T."/>
            <person name="Tanaka T."/>
            <person name="Ishii S."/>
            <person name="Yamamoto J."/>
            <person name="Saito K."/>
            <person name="Kawai Y."/>
            <person name="Isono Y."/>
            <person name="Nakamura Y."/>
            <person name="Nagahari K."/>
            <person name="Murakami K."/>
            <person name="Yasuda T."/>
            <person name="Iwayanagi T."/>
            <person name="Wagatsuma M."/>
            <person name="Shiratori A."/>
            <person name="Sudo H."/>
            <person name="Hosoiri T."/>
            <person name="Kaku Y."/>
            <person name="Kodaira H."/>
            <person name="Kondo H."/>
            <person name="Sugawara M."/>
            <person name="Takahashi M."/>
            <person name="Kanda K."/>
            <person name="Yokoi T."/>
            <person name="Furuya T."/>
            <person name="Kikkawa E."/>
            <person name="Omura Y."/>
            <person name="Abe K."/>
            <person name="Kamihara K."/>
            <person name="Katsuta N."/>
            <person name="Sato K."/>
            <person name="Tanikawa M."/>
            <person name="Yamazaki M."/>
            <person name="Ninomiya K."/>
            <person name="Ishibashi T."/>
            <person name="Yamashita H."/>
            <person name="Murakawa K."/>
            <person name="Fujimori K."/>
            <person name="Tanai H."/>
            <person name="Kimata M."/>
            <person name="Watanabe M."/>
            <person name="Hiraoka S."/>
            <person name="Chiba Y."/>
            <person name="Ishida S."/>
            <person name="Ono Y."/>
            <person name="Takiguchi S."/>
            <person name="Watanabe S."/>
            <person name="Yosida M."/>
            <person name="Hotuta T."/>
            <person name="Kusano J."/>
            <person name="Kanehori K."/>
            <person name="Takahashi-Fujii A."/>
            <person name="Hara H."/>
            <person name="Tanase T.-O."/>
            <person name="Nomura Y."/>
            <person name="Togiya S."/>
            <person name="Komai F."/>
            <person name="Hara R."/>
            <person name="Takeuchi K."/>
            <person name="Arita M."/>
            <person name="Imose N."/>
            <person name="Musashino K."/>
            <person name="Yuuki H."/>
            <person name="Oshima A."/>
            <person name="Sasaki N."/>
            <person name="Aotsuka S."/>
            <person name="Yoshikawa Y."/>
            <person name="Matsunawa H."/>
            <person name="Ichihara T."/>
            <person name="Shiohata N."/>
            <person name="Sano S."/>
            <person name="Moriya S."/>
            <person name="Momiyama H."/>
            <person name="Satoh N."/>
            <person name="Takami S."/>
            <person name="Terashima Y."/>
            <person name="Suzuki O."/>
            <person name="Nakagawa S."/>
            <person name="Senoh A."/>
            <person name="Mizoguchi H."/>
            <person name="Goto Y."/>
            <person name="Shimizu F."/>
            <person name="Wakebe H."/>
            <person name="Hishigaki H."/>
            <person name="Watanabe T."/>
            <person name="Sugiyama A."/>
            <person name="Takemoto M."/>
            <person name="Kawakami B."/>
            <person name="Yamazaki M."/>
            <person name="Watanabe K."/>
            <person name="Kumagai A."/>
            <person name="Itakura S."/>
            <person name="Fukuzumi Y."/>
            <person name="Fujimori Y."/>
            <person name="Komiyama M."/>
            <person name="Tashiro H."/>
            <person name="Tanigami A."/>
            <person name="Fujiwara T."/>
            <person name="Ono T."/>
            <person name="Yamada K."/>
            <person name="Fujii Y."/>
            <person name="Ozaki K."/>
            <person name="Hirao M."/>
            <person name="Ohmori Y."/>
            <person name="Kawabata A."/>
            <person name="Hikiji T."/>
            <person name="Kobatake N."/>
            <person name="Inagaki H."/>
            <person name="Ikema Y."/>
            <person name="Okamoto S."/>
            <person name="Okitani R."/>
            <person name="Kawakami T."/>
            <person name="Noguchi S."/>
            <person name="Itoh T."/>
            <person name="Shigeta K."/>
            <person name="Senba T."/>
            <person name="Matsumura K."/>
            <person name="Nakajima Y."/>
            <person name="Mizuno T."/>
            <person name="Morinaga M."/>
            <person name="Sasaki M."/>
            <person name="Togashi T."/>
            <person name="Oyama M."/>
            <person name="Hata H."/>
            <person name="Watanabe M."/>
            <person name="Komatsu T."/>
            <person name="Mizushima-Sugano J."/>
            <person name="Satoh T."/>
            <person name="Shirai Y."/>
            <person name="Takahashi Y."/>
            <person name="Nakagawa K."/>
            <person name="Okumura K."/>
            <person name="Nagase T."/>
            <person name="Nomura N."/>
            <person name="Kikuchi H."/>
            <person name="Masuho Y."/>
            <person name="Yamashita R."/>
            <person name="Nakai K."/>
            <person name="Yada T."/>
            <person name="Nakamura Y."/>
            <person name="Ohara O."/>
            <person name="Isogai T."/>
            <person name="Sugano S."/>
        </authorList>
    </citation>
    <scope>NUCLEOTIDE SEQUENCE [LARGE SCALE MRNA]</scope>
    <source>
        <tissue>Brain</tissue>
    </source>
</reference>
<reference key="3">
    <citation type="journal article" date="2004" name="Nature">
        <title>The DNA sequence and comparative analysis of human chromosome 10.</title>
        <authorList>
            <person name="Deloukas P."/>
            <person name="Earthrowl M.E."/>
            <person name="Grafham D.V."/>
            <person name="Rubenfield M."/>
            <person name="French L."/>
            <person name="Steward C.A."/>
            <person name="Sims S.K."/>
            <person name="Jones M.C."/>
            <person name="Searle S."/>
            <person name="Scott C."/>
            <person name="Howe K."/>
            <person name="Hunt S.E."/>
            <person name="Andrews T.D."/>
            <person name="Gilbert J.G.R."/>
            <person name="Swarbreck D."/>
            <person name="Ashurst J.L."/>
            <person name="Taylor A."/>
            <person name="Battles J."/>
            <person name="Bird C.P."/>
            <person name="Ainscough R."/>
            <person name="Almeida J.P."/>
            <person name="Ashwell R.I.S."/>
            <person name="Ambrose K.D."/>
            <person name="Babbage A.K."/>
            <person name="Bagguley C.L."/>
            <person name="Bailey J."/>
            <person name="Banerjee R."/>
            <person name="Bates K."/>
            <person name="Beasley H."/>
            <person name="Bray-Allen S."/>
            <person name="Brown A.J."/>
            <person name="Brown J.Y."/>
            <person name="Burford D.C."/>
            <person name="Burrill W."/>
            <person name="Burton J."/>
            <person name="Cahill P."/>
            <person name="Camire D."/>
            <person name="Carter N.P."/>
            <person name="Chapman J.C."/>
            <person name="Clark S.Y."/>
            <person name="Clarke G."/>
            <person name="Clee C.M."/>
            <person name="Clegg S."/>
            <person name="Corby N."/>
            <person name="Coulson A."/>
            <person name="Dhami P."/>
            <person name="Dutta I."/>
            <person name="Dunn M."/>
            <person name="Faulkner L."/>
            <person name="Frankish A."/>
            <person name="Frankland J.A."/>
            <person name="Garner P."/>
            <person name="Garnett J."/>
            <person name="Gribble S."/>
            <person name="Griffiths C."/>
            <person name="Grocock R."/>
            <person name="Gustafson E."/>
            <person name="Hammond S."/>
            <person name="Harley J.L."/>
            <person name="Hart E."/>
            <person name="Heath P.D."/>
            <person name="Ho T.P."/>
            <person name="Hopkins B."/>
            <person name="Horne J."/>
            <person name="Howden P.J."/>
            <person name="Huckle E."/>
            <person name="Hynds C."/>
            <person name="Johnson C."/>
            <person name="Johnson D."/>
            <person name="Kana A."/>
            <person name="Kay M."/>
            <person name="Kimberley A.M."/>
            <person name="Kershaw J.K."/>
            <person name="Kokkinaki M."/>
            <person name="Laird G.K."/>
            <person name="Lawlor S."/>
            <person name="Lee H.M."/>
            <person name="Leongamornlert D.A."/>
            <person name="Laird G."/>
            <person name="Lloyd C."/>
            <person name="Lloyd D.M."/>
            <person name="Loveland J."/>
            <person name="Lovell J."/>
            <person name="McLaren S."/>
            <person name="McLay K.E."/>
            <person name="McMurray A."/>
            <person name="Mashreghi-Mohammadi M."/>
            <person name="Matthews L."/>
            <person name="Milne S."/>
            <person name="Nickerson T."/>
            <person name="Nguyen M."/>
            <person name="Overton-Larty E."/>
            <person name="Palmer S.A."/>
            <person name="Pearce A.V."/>
            <person name="Peck A.I."/>
            <person name="Pelan S."/>
            <person name="Phillimore B."/>
            <person name="Porter K."/>
            <person name="Rice C.M."/>
            <person name="Rogosin A."/>
            <person name="Ross M.T."/>
            <person name="Sarafidou T."/>
            <person name="Sehra H.K."/>
            <person name="Shownkeen R."/>
            <person name="Skuce C.D."/>
            <person name="Smith M."/>
            <person name="Standring L."/>
            <person name="Sycamore N."/>
            <person name="Tester J."/>
            <person name="Thorpe A."/>
            <person name="Torcasso W."/>
            <person name="Tracey A."/>
            <person name="Tromans A."/>
            <person name="Tsolas J."/>
            <person name="Wall M."/>
            <person name="Walsh J."/>
            <person name="Wang H."/>
            <person name="Weinstock K."/>
            <person name="West A.P."/>
            <person name="Willey D.L."/>
            <person name="Whitehead S.L."/>
            <person name="Wilming L."/>
            <person name="Wray P.W."/>
            <person name="Young L."/>
            <person name="Chen Y."/>
            <person name="Lovering R.C."/>
            <person name="Moschonas N.K."/>
            <person name="Siebert R."/>
            <person name="Fechtel K."/>
            <person name="Bentley D."/>
            <person name="Durbin R.M."/>
            <person name="Hubbard T."/>
            <person name="Doucette-Stamm L."/>
            <person name="Beck S."/>
            <person name="Smith D.R."/>
            <person name="Rogers J."/>
        </authorList>
    </citation>
    <scope>NUCLEOTIDE SEQUENCE [LARGE SCALE GENOMIC DNA]</scope>
</reference>
<reference key="4">
    <citation type="submission" date="2005-09" db="EMBL/GenBank/DDBJ databases">
        <authorList>
            <person name="Mural R.J."/>
            <person name="Istrail S."/>
            <person name="Sutton G.G."/>
            <person name="Florea L."/>
            <person name="Halpern A.L."/>
            <person name="Mobarry C.M."/>
            <person name="Lippert R."/>
            <person name="Walenz B."/>
            <person name="Shatkay H."/>
            <person name="Dew I."/>
            <person name="Miller J.R."/>
            <person name="Flanigan M.J."/>
            <person name="Edwards N.J."/>
            <person name="Bolanos R."/>
            <person name="Fasulo D."/>
            <person name="Halldorsson B.V."/>
            <person name="Hannenhalli S."/>
            <person name="Turner R."/>
            <person name="Yooseph S."/>
            <person name="Lu F."/>
            <person name="Nusskern D.R."/>
            <person name="Shue B.C."/>
            <person name="Zheng X.H."/>
            <person name="Zhong F."/>
            <person name="Delcher A.L."/>
            <person name="Huson D.H."/>
            <person name="Kravitz S.A."/>
            <person name="Mouchard L."/>
            <person name="Reinert K."/>
            <person name="Remington K.A."/>
            <person name="Clark A.G."/>
            <person name="Waterman M.S."/>
            <person name="Eichler E.E."/>
            <person name="Adams M.D."/>
            <person name="Hunkapiller M.W."/>
            <person name="Myers E.W."/>
            <person name="Venter J.C."/>
        </authorList>
    </citation>
    <scope>NUCLEOTIDE SEQUENCE [LARGE SCALE GENOMIC DNA]</scope>
</reference>
<reference key="5">
    <citation type="journal article" date="2000" name="Genome Res.">
        <title>Cloning and functional analysis of cDNAs with open reading frames for 300 previously undefined genes expressed in CD34+ hematopoietic stem/progenitor cells.</title>
        <authorList>
            <person name="Zhang Q.-H."/>
            <person name="Ye M."/>
            <person name="Wu X.-Y."/>
            <person name="Ren S.-X."/>
            <person name="Zhao M."/>
            <person name="Zhao C.-J."/>
            <person name="Fu G."/>
            <person name="Shen Y."/>
            <person name="Fan H.-Y."/>
            <person name="Lu G."/>
            <person name="Zhong M."/>
            <person name="Xu X.-R."/>
            <person name="Han Z.-G."/>
            <person name="Zhang J.-W."/>
            <person name="Tao J."/>
            <person name="Huang Q.-H."/>
            <person name="Zhou J."/>
            <person name="Hu G.-X."/>
            <person name="Gu J."/>
            <person name="Chen S.-J."/>
            <person name="Chen Z."/>
        </authorList>
    </citation>
    <scope>NUCLEOTIDE SEQUENCE [LARGE SCALE MRNA] OF 410-1217</scope>
    <source>
        <tissue>Umbilical cord blood</tissue>
    </source>
</reference>
<reference key="6">
    <citation type="submission" date="1998-03" db="EMBL/GenBank/DDBJ databases">
        <authorList>
            <person name="Stanchi F."/>
            <person name="Bertocco E."/>
            <person name="Simionati B."/>
            <person name="Zimbello R."/>
            <person name="Lanfranchi G."/>
            <person name="Valle G."/>
        </authorList>
    </citation>
    <scope>NUCLEOTIDE SEQUENCE [MRNA] OF 827-1217</scope>
    <source>
        <tissue>Neuron</tissue>
    </source>
</reference>
<reference key="7">
    <citation type="journal article" date="2008" name="Mol. Cell">
        <title>Acetylation of Smc3 by Eco1 is required for S phase sister chromatid cohesion in both human and yeast.</title>
        <authorList>
            <person name="Zhang J."/>
            <person name="Shi X."/>
            <person name="Li Y."/>
            <person name="Kim B.J."/>
            <person name="Jia J."/>
            <person name="Huang Z."/>
            <person name="Yang T."/>
            <person name="Fu X."/>
            <person name="Jung S.Y."/>
            <person name="Wang Y."/>
            <person name="Zhang P."/>
            <person name="Kim S.T."/>
            <person name="Pan X."/>
            <person name="Qin J."/>
        </authorList>
    </citation>
    <scope>PROTEIN SEQUENCE OF 101-113</scope>
    <scope>ACETYLATION AT LYS-105 AND LYS-106</scope>
    <scope>MUTAGENESIS OF LYS-105 AND LYS-106</scope>
</reference>
<reference key="8">
    <citation type="journal article" date="2000" name="J. Cell Biol.">
        <title>Characterization of vertebrate cohesin complexes and their regulation in prophase.</title>
        <authorList>
            <person name="Sumara I."/>
            <person name="Vorlaufer E."/>
            <person name="Gieffers C."/>
            <person name="Peters B.H."/>
            <person name="Peters J.-M."/>
        </authorList>
    </citation>
    <scope>CHARACTERIZATION</scope>
    <scope>FUNCTION</scope>
    <scope>IDENTIFICATION IN A COHESIN COMPLEX WITH SMC1A; STAG1 OR STAG2</scope>
</reference>
<reference key="9">
    <citation type="journal article" date="2001" name="J. Biol. Chem.">
        <title>A potential role for human cohesin in mitotic spindle aster assembly.</title>
        <authorList>
            <person name="Gregson H.C."/>
            <person name="Schmiesing J.A."/>
            <person name="Kim J.-S."/>
            <person name="Kobayashi T."/>
            <person name="Zhou S."/>
            <person name="Yokomori K."/>
        </authorList>
    </citation>
    <scope>INTERACTION WITH NUMA1</scope>
</reference>
<reference key="10">
    <citation type="journal article" date="2002" name="Nature">
        <title>A chromatin remodelling complex that loads cohesin onto human chromosomes.</title>
        <authorList>
            <person name="Hakimi M.-A."/>
            <person name="Bochar D.A."/>
            <person name="Schmiesing J.A."/>
            <person name="Dong Y."/>
            <person name="Barak O.G."/>
            <person name="Speicher D.W."/>
            <person name="Yokomori K."/>
            <person name="Shiekhattar R."/>
        </authorList>
    </citation>
    <scope>INTERACTION WITH HDAC2</scope>
</reference>
<reference key="11">
    <citation type="journal article" date="2005" name="BMC Cell Biol.">
        <title>Hinderin, a five-domains protein including coiled-coil motifs that binds to SMC3.</title>
        <authorList>
            <person name="Patel C.A."/>
            <person name="Ghiselli G."/>
        </authorList>
    </citation>
    <scope>INTERACTION WITH KIAA1328</scope>
</reference>
<reference key="12">
    <citation type="journal article" date="2005" name="Mol. Cell">
        <title>Sororin, a substrate of the anaphase-promoting complex, is required for sister chromatid cohesion in vertebrates.</title>
        <authorList>
            <person name="Rankin S."/>
            <person name="Ayad N.G."/>
            <person name="Kirschner M.W."/>
        </authorList>
    </citation>
    <scope>IDENTIFICATION IN A COMPLEX WITH CDCA5; SMC1A; RAD21; PDS5A AND PDS5B</scope>
</reference>
<reference key="13">
    <citation type="journal article" date="2005" name="Mol. Cell">
        <authorList>
            <person name="Rankin S."/>
            <person name="Ayad N.G."/>
            <person name="Kirschner M.W."/>
        </authorList>
    </citation>
    <scope>ERRATUM OF PUBMED:15837422</scope>
</reference>
<reference key="14">
    <citation type="journal article" date="2006" name="J. Cell Sci.">
        <title>The DNA helicase ChlR1 is required for sister chromatid cohesion in mammalian cells.</title>
        <authorList>
            <person name="Parish J.L."/>
            <person name="Rosa J."/>
            <person name="Wang X."/>
            <person name="Lahti J.M."/>
            <person name="Doxsey S.J."/>
            <person name="Androphy E.J."/>
        </authorList>
    </citation>
    <scope>INTERACTION WITH DDX11</scope>
</reference>
<reference key="15">
    <citation type="journal article" date="2007" name="Science">
        <title>ATM and ATR substrate analysis reveals extensive protein networks responsive to DNA damage.</title>
        <authorList>
            <person name="Matsuoka S."/>
            <person name="Ballif B.A."/>
            <person name="Smogorzewska A."/>
            <person name="McDonald E.R. III"/>
            <person name="Hurov K.E."/>
            <person name="Luo J."/>
            <person name="Bakalarski C.E."/>
            <person name="Zhao Z."/>
            <person name="Solimini N."/>
            <person name="Lerenthal Y."/>
            <person name="Shiloh Y."/>
            <person name="Gygi S.P."/>
            <person name="Elledge S.J."/>
        </authorList>
    </citation>
    <scope>PHOSPHORYLATION [LARGE SCALE ANALYSIS] AT SER-787; SER-1065 AND SER-1067</scope>
    <scope>IDENTIFICATION BY MASS SPECTROMETRY [LARGE SCALE ANALYSIS]</scope>
    <source>
        <tissue>Embryonic kidney</tissue>
    </source>
</reference>
<reference key="16">
    <citation type="journal article" date="2008" name="J. Proteome Res.">
        <title>Phosphorylation analysis of primary human T lymphocytes using sequential IMAC and titanium oxide enrichment.</title>
        <authorList>
            <person name="Carrascal M."/>
            <person name="Ovelleiro D."/>
            <person name="Casas V."/>
            <person name="Gay M."/>
            <person name="Abian J."/>
        </authorList>
    </citation>
    <scope>IDENTIFICATION BY MASS SPECTROMETRY [LARGE SCALE ANALYSIS]</scope>
    <source>
        <tissue>T-cell</tissue>
    </source>
</reference>
<reference key="17">
    <citation type="journal article" date="2008" name="Mol. Cell">
        <title>Kinase-selective enrichment enables quantitative phosphoproteomics of the kinome across the cell cycle.</title>
        <authorList>
            <person name="Daub H."/>
            <person name="Olsen J.V."/>
            <person name="Bairlein M."/>
            <person name="Gnad F."/>
            <person name="Oppermann F.S."/>
            <person name="Korner R."/>
            <person name="Greff Z."/>
            <person name="Keri G."/>
            <person name="Stemmann O."/>
            <person name="Mann M."/>
        </authorList>
    </citation>
    <scope>IDENTIFICATION BY MASS SPECTROMETRY [LARGE SCALE ANALYSIS]</scope>
    <source>
        <tissue>Cervix carcinoma</tissue>
    </source>
</reference>
<reference key="18">
    <citation type="journal article" date="2008" name="Proc. Natl. Acad. Sci. U.S.A.">
        <title>A quantitative atlas of mitotic phosphorylation.</title>
        <authorList>
            <person name="Dephoure N."/>
            <person name="Zhou C."/>
            <person name="Villen J."/>
            <person name="Beausoleil S.A."/>
            <person name="Bakalarski C.E."/>
            <person name="Elledge S.J."/>
            <person name="Gygi S.P."/>
        </authorList>
    </citation>
    <scope>PHOSPHORYLATION [LARGE SCALE ANALYSIS] AT SER-1065 AND SER-1067</scope>
    <scope>IDENTIFICATION BY MASS SPECTROMETRY [LARGE SCALE ANALYSIS]</scope>
    <source>
        <tissue>Cervix carcinoma</tissue>
    </source>
</reference>
<reference key="19">
    <citation type="journal article" date="2009" name="Nature">
        <title>Cohesin acetylation speeds the replication fork.</title>
        <authorList>
            <person name="Terret M.E."/>
            <person name="Sherwood R."/>
            <person name="Rahman S."/>
            <person name="Qin J."/>
            <person name="Jallepalli P.V."/>
        </authorList>
    </citation>
    <scope>FUNCTION</scope>
    <scope>ACETYLATION AT LYS-105 AND LYS-106</scope>
    <scope>INTERACTION WITH PDS5A AND WAPL</scope>
    <scope>MUTAGENESIS OF LYS-105 AND LYS-106</scope>
</reference>
<reference key="20">
    <citation type="journal article" date="2009" name="Sci. Signal.">
        <title>Quantitative phosphoproteomic analysis of T cell receptor signaling reveals system-wide modulation of protein-protein interactions.</title>
        <authorList>
            <person name="Mayya V."/>
            <person name="Lundgren D.H."/>
            <person name="Hwang S.-I."/>
            <person name="Rezaul K."/>
            <person name="Wu L."/>
            <person name="Eng J.K."/>
            <person name="Rodionov V."/>
            <person name="Han D.K."/>
        </authorList>
    </citation>
    <scope>IDENTIFICATION BY MASS SPECTROMETRY [LARGE SCALE ANALYSIS]</scope>
    <source>
        <tissue>Leukemic T-cell</tissue>
    </source>
</reference>
<reference key="21">
    <citation type="journal article" date="2009" name="Science">
        <title>Lysine acetylation targets protein complexes and co-regulates major cellular functions.</title>
        <authorList>
            <person name="Choudhary C."/>
            <person name="Kumar C."/>
            <person name="Gnad F."/>
            <person name="Nielsen M.L."/>
            <person name="Rehman M."/>
            <person name="Walther T.C."/>
            <person name="Olsen J.V."/>
            <person name="Mann M."/>
        </authorList>
    </citation>
    <scope>ACETYLATION [LARGE SCALE ANALYSIS] AT LYS-105; LYS-106; LYS-140 AND LYS-1190</scope>
    <scope>IDENTIFICATION BY MASS SPECTROMETRY [LARGE SCALE ANALYSIS]</scope>
</reference>
<reference key="22">
    <citation type="journal article" date="2010" name="Sci. Signal.">
        <title>Quantitative phosphoproteomics reveals widespread full phosphorylation site occupancy during mitosis.</title>
        <authorList>
            <person name="Olsen J.V."/>
            <person name="Vermeulen M."/>
            <person name="Santamaria A."/>
            <person name="Kumar C."/>
            <person name="Miller M.L."/>
            <person name="Jensen L.J."/>
            <person name="Gnad F."/>
            <person name="Cox J."/>
            <person name="Jensen T.S."/>
            <person name="Nigg E.A."/>
            <person name="Brunak S."/>
            <person name="Mann M."/>
        </authorList>
    </citation>
    <scope>PHOSPHORYLATION [LARGE SCALE ANALYSIS] AT THR-783; SER-787; SER-1067 AND SER-1083</scope>
    <scope>IDENTIFICATION BY MASS SPECTROMETRY [LARGE SCALE ANALYSIS]</scope>
    <source>
        <tissue>Cervix carcinoma</tissue>
    </source>
</reference>
<reference key="23">
    <citation type="journal article" date="2011" name="BMC Syst. Biol.">
        <title>Initial characterization of the human central proteome.</title>
        <authorList>
            <person name="Burkard T.R."/>
            <person name="Planyavsky M."/>
            <person name="Kaupe I."/>
            <person name="Breitwieser F.P."/>
            <person name="Buerckstuemmer T."/>
            <person name="Bennett K.L."/>
            <person name="Superti-Furga G."/>
            <person name="Colinge J."/>
        </authorList>
    </citation>
    <scope>IDENTIFICATION BY MASS SPECTROMETRY [LARGE SCALE ANALYSIS]</scope>
</reference>
<reference key="24">
    <citation type="journal article" date="2011" name="Sci. Signal.">
        <title>System-wide temporal characterization of the proteome and phosphoproteome of human embryonic stem cell differentiation.</title>
        <authorList>
            <person name="Rigbolt K.T."/>
            <person name="Prokhorova T.A."/>
            <person name="Akimov V."/>
            <person name="Henningsen J."/>
            <person name="Johansen P.T."/>
            <person name="Kratchmarova I."/>
            <person name="Kassem M."/>
            <person name="Mann M."/>
            <person name="Olsen J.V."/>
            <person name="Blagoev B."/>
        </authorList>
    </citation>
    <scope>PHOSPHORYLATION [LARGE SCALE ANALYSIS] AT SER-1067 AND SER-1083</scope>
    <scope>IDENTIFICATION BY MASS SPECTROMETRY [LARGE SCALE ANALYSIS]</scope>
</reference>
<reference key="25">
    <citation type="journal article" date="2012" name="Nature">
        <title>HDAC8 mutations in Cornelia de Lange syndrome affect the cohesin acetylation cycle.</title>
        <authorList>
            <person name="Deardorff M.A."/>
            <person name="Bando M."/>
            <person name="Nakato R."/>
            <person name="Watrin E."/>
            <person name="Itoh T."/>
            <person name="Minamino M."/>
            <person name="Saitoh K."/>
            <person name="Komata M."/>
            <person name="Katou Y."/>
            <person name="Clark D."/>
            <person name="Cole K.E."/>
            <person name="De Baere E."/>
            <person name="Decroos C."/>
            <person name="Di Donato N."/>
            <person name="Ernst S."/>
            <person name="Francey L.J."/>
            <person name="Gyftodimou Y."/>
            <person name="Hirashima K."/>
            <person name="Hullings M."/>
            <person name="Ishikawa Y."/>
            <person name="Jaulin C."/>
            <person name="Kaur M."/>
            <person name="Kiyono T."/>
            <person name="Lombardi P.M."/>
            <person name="Magnaghi-Jaulin L."/>
            <person name="Mortier G.R."/>
            <person name="Nozaki N."/>
            <person name="Petersen M.B."/>
            <person name="Seimiya H."/>
            <person name="Siu V.M."/>
            <person name="Suzuki Y."/>
            <person name="Takagaki K."/>
            <person name="Wilde J.J."/>
            <person name="Willems P.J."/>
            <person name="Prigent C."/>
            <person name="Gillessen-Kaesbach G."/>
            <person name="Christianson D.W."/>
            <person name="Kaiser F.J."/>
            <person name="Jackson L.G."/>
            <person name="Hirota T."/>
            <person name="Krantz I.D."/>
            <person name="Shirahige K."/>
        </authorList>
    </citation>
    <scope>ACETYLATION</scope>
    <scope>DEACETYLATION BY HDAC8</scope>
</reference>
<reference key="26">
    <citation type="journal article" date="2012" name="Proc. Natl. Acad. Sci. U.S.A.">
        <title>In vitro loading of human cohesin on DNA by the human Scc2-Scc4 loader complex.</title>
        <authorList>
            <person name="Bermudez V.P."/>
            <person name="Farina A."/>
            <person name="Higashi T.L."/>
            <person name="Du F."/>
            <person name="Tappin I."/>
            <person name="Takahashi T.S."/>
            <person name="Hurwitz J."/>
        </authorList>
    </citation>
    <scope>IDENTIFICATION IN A COHESIN COMPLEX WITH SMC1A; STAG1 AND RAD21</scope>
    <scope>INTERACTION WITH SMC1A AND HETERODIMER NIPB-MAU2</scope>
</reference>
<reference key="27">
    <citation type="journal article" date="2013" name="J. Proteome Res.">
        <title>Toward a comprehensive characterization of a human cancer cell phosphoproteome.</title>
        <authorList>
            <person name="Zhou H."/>
            <person name="Di Palma S."/>
            <person name="Preisinger C."/>
            <person name="Peng M."/>
            <person name="Polat A.N."/>
            <person name="Heck A.J."/>
            <person name="Mohammed S."/>
        </authorList>
    </citation>
    <scope>PHOSPHORYLATION [LARGE SCALE ANALYSIS] AT SER-886 AND SER-1067</scope>
    <scope>IDENTIFICATION BY MASS SPECTROMETRY [LARGE SCALE ANALYSIS]</scope>
    <source>
        <tissue>Cervix carcinoma</tissue>
        <tissue>Erythroleukemia</tissue>
    </source>
</reference>
<reference key="28">
    <citation type="journal article" date="2014" name="J. Proteomics">
        <title>An enzyme assisted RP-RPLC approach for in-depth analysis of human liver phosphoproteome.</title>
        <authorList>
            <person name="Bian Y."/>
            <person name="Song C."/>
            <person name="Cheng K."/>
            <person name="Dong M."/>
            <person name="Wang F."/>
            <person name="Huang J."/>
            <person name="Sun D."/>
            <person name="Wang L."/>
            <person name="Ye M."/>
            <person name="Zou H."/>
        </authorList>
    </citation>
    <scope>PHOSPHORYLATION [LARGE SCALE ANALYSIS] AT SER-1065 AND SER-1067</scope>
    <scope>IDENTIFICATION BY MASS SPECTROMETRY [LARGE SCALE ANALYSIS]</scope>
    <source>
        <tissue>Liver</tissue>
    </source>
</reference>
<reference key="29">
    <citation type="journal article" date="2019" name="Brain">
        <title>Cohesin complex-associated holoprosencephaly.</title>
        <authorList>
            <person name="Kruszka P."/>
            <person name="Berger S.I."/>
            <person name="Casa V."/>
            <person name="Dekker M.R."/>
            <person name="Gaesser J."/>
            <person name="Weiss K."/>
            <person name="Martinez A.F."/>
            <person name="Murdock D.R."/>
            <person name="Louie R.J."/>
            <person name="Prijoles E.J."/>
            <person name="Lichty A.W."/>
            <person name="Brouwer O.F."/>
            <person name="Zonneveld-Huijssoon E."/>
            <person name="Stephan M.J."/>
            <person name="Hogue J."/>
            <person name="Hu P."/>
            <person name="Tanima-Nagai M."/>
            <person name="Everson J.L."/>
            <person name="Prasad C."/>
            <person name="Cereda A."/>
            <person name="Iascone M."/>
            <person name="Schreiber A."/>
            <person name="Zurcher V."/>
            <person name="Corsten-Janssen N."/>
            <person name="Escobar L."/>
            <person name="Clegg N.J."/>
            <person name="Delgado M.R."/>
            <person name="Hajirnis O."/>
            <person name="Balasubramanian M."/>
            <person name="Kayserili H."/>
            <person name="Deardorff M."/>
            <person name="Poot R.A."/>
            <person name="Wendt K.S."/>
            <person name="Lipinski R.J."/>
            <person name="Muenke M."/>
        </authorList>
    </citation>
    <scope>VARIANT CDLS3 380-GLY--GLN-384 DEL</scope>
</reference>
<reference key="30">
    <citation type="journal article" date="2019" name="Elife">
        <title>Systematic identification of cancer cell vulnerabilities to natural killer cell-mediated immune surveillance.</title>
        <authorList>
            <person name="Pech M.F."/>
            <person name="Fong L.E."/>
            <person name="Villalta J.E."/>
            <person name="Chan L.J."/>
            <person name="Kharbanda S."/>
            <person name="O'Brien J.J."/>
            <person name="McAllister F.E."/>
            <person name="Firestone A.J."/>
            <person name="Jan C.H."/>
            <person name="Settleman J."/>
        </authorList>
    </citation>
    <scope>UBIQUITINATION</scope>
</reference>
<reference evidence="24 25 26 27" key="31">
    <citation type="journal article" date="2020" name="Science">
        <title>Cryo-EM structure of the human cohesin-NIPBL-DNA complex.</title>
        <authorList>
            <person name="Shi Z."/>
            <person name="Gao H."/>
            <person name="Bai X.C."/>
            <person name="Yu H."/>
        </authorList>
    </citation>
    <scope>STRUCTURE BY ELECTRON MICROSCOPY (3.90 ANGSTROMS)</scope>
    <scope>X-RAY CRYSTALLOGRAPHY (2.31 ANGSTROMS) OF 493-685</scope>
    <scope>IDENTIFICATION IN THE COHESIN COMPLEX</scope>
    <scope>INTERACTION WITH NIPBL</scope>
</reference>
<reference key="32">
    <citation type="journal article" date="2007" name="Am. J. Hum. Genet.">
        <title>Mutations in cohesin complex members SMC3 and SMC1A cause a mild variant of Cornelia de Lange syndrome with predominant mental retardation.</title>
        <authorList>
            <person name="Deardorff M.A."/>
            <person name="Kaur M."/>
            <person name="Yaeger D."/>
            <person name="Rampuria A."/>
            <person name="Korolev S."/>
            <person name="Pie J."/>
            <person name="Gil-Rodriguez C."/>
            <person name="Arnedo M."/>
            <person name="Loeys B."/>
            <person name="Kline A.D."/>
            <person name="Wilson M."/>
            <person name="Lillquist K."/>
            <person name="Siu V."/>
            <person name="Ramos F.J."/>
            <person name="Musio A."/>
            <person name="Jackson L.S."/>
            <person name="Dorsett D."/>
            <person name="Krantz I.D."/>
        </authorList>
    </citation>
    <scope>VARIANT CDLS3 GLU-491 DEL</scope>
</reference>
<reference key="33">
    <citation type="journal article" date="2009" name="Hum. Mol. Genet.">
        <title>Cornelia de Lange syndrome mutations in SMC1A or SMC3 affect binding to DNA.</title>
        <authorList>
            <person name="Revenkova E."/>
            <person name="Focarelli M.L."/>
            <person name="Susani L."/>
            <person name="Paulis M."/>
            <person name="Bassi M.T."/>
            <person name="Mannini L."/>
            <person name="Frattini A."/>
            <person name="Delia D."/>
            <person name="Krantz I."/>
            <person name="Vezzoni P."/>
            <person name="Jessberger R."/>
            <person name="Musio A."/>
        </authorList>
    </citation>
    <scope>CHARACTERIZATION OF VARIANT CDLS3 GLU-491 DEL</scope>
    <scope>GENOMIC INSTABILITY OF CDLS CELL LINES TO IONIZING RADIATION</scope>
</reference>
<dbReference type="EMBL" id="AF020043">
    <property type="protein sequence ID" value="AAC14893.1"/>
    <property type="molecule type" value="mRNA"/>
</dbReference>
<dbReference type="EMBL" id="AK289771">
    <property type="protein sequence ID" value="BAF82460.1"/>
    <property type="molecule type" value="mRNA"/>
</dbReference>
<dbReference type="EMBL" id="AL359260">
    <property type="status" value="NOT_ANNOTATED_CDS"/>
    <property type="molecule type" value="Genomic_DNA"/>
</dbReference>
<dbReference type="EMBL" id="CH471066">
    <property type="protein sequence ID" value="EAW49557.1"/>
    <property type="molecule type" value="Genomic_DNA"/>
</dbReference>
<dbReference type="EMBL" id="AF067163">
    <property type="protein sequence ID" value="AAD32447.1"/>
    <property type="status" value="ALT_FRAME"/>
    <property type="molecule type" value="mRNA"/>
</dbReference>
<dbReference type="EMBL" id="AJ005015">
    <property type="protein sequence ID" value="CAA06289.1"/>
    <property type="molecule type" value="mRNA"/>
</dbReference>
<dbReference type="CCDS" id="CCDS31285.1"/>
<dbReference type="RefSeq" id="NP_005436.1">
    <property type="nucleotide sequence ID" value="NM_005445.4"/>
</dbReference>
<dbReference type="PDB" id="6WG3">
    <property type="method" value="EM"/>
    <property type="resolution" value="5.30 A"/>
    <property type="chains" value="B=1-1217"/>
</dbReference>
<dbReference type="PDB" id="6WG4">
    <property type="method" value="X-ray"/>
    <property type="resolution" value="2.31 A"/>
    <property type="chains" value="B=493-685"/>
</dbReference>
<dbReference type="PDB" id="6WG6">
    <property type="method" value="X-ray"/>
    <property type="resolution" value="3.54 A"/>
    <property type="chains" value="B/D/F/H/J/L=466-713"/>
</dbReference>
<dbReference type="PDB" id="6WGE">
    <property type="method" value="EM"/>
    <property type="resolution" value="3.90 A"/>
    <property type="chains" value="B=1-1217"/>
</dbReference>
<dbReference type="PDB" id="7W1M">
    <property type="method" value="EM"/>
    <property type="resolution" value="6.50 A"/>
    <property type="chains" value="B=1-1217"/>
</dbReference>
<dbReference type="PDB" id="8P0A">
    <property type="method" value="EM"/>
    <property type="resolution" value="3.67 A"/>
    <property type="chains" value="B=1-961, B=979-1217"/>
</dbReference>
<dbReference type="PDB" id="8PQ5">
    <property type="method" value="EM"/>
    <property type="resolution" value="4.40 A"/>
    <property type="chains" value="B=799-1217"/>
</dbReference>
<dbReference type="PDB" id="8ROH">
    <property type="method" value="X-ray"/>
    <property type="resolution" value="2.60 A"/>
    <property type="chains" value="A=1-219, A=971-1217"/>
</dbReference>
<dbReference type="PDB" id="8ROI">
    <property type="method" value="X-ray"/>
    <property type="resolution" value="2.45 A"/>
    <property type="chains" value="A=1-961, A=979-1217"/>
</dbReference>
<dbReference type="PDB" id="8ROJ">
    <property type="method" value="X-ray"/>
    <property type="resolution" value="3.00 A"/>
    <property type="chains" value="A=1-961, A=979-1217"/>
</dbReference>
<dbReference type="PDB" id="8ROK">
    <property type="method" value="X-ray"/>
    <property type="resolution" value="2.25 A"/>
    <property type="chains" value="A/C=1-961, A/C=979-1217"/>
</dbReference>
<dbReference type="PDB" id="8ROL">
    <property type="method" value="X-ray"/>
    <property type="resolution" value="3.11 A"/>
    <property type="chains" value="A=1-961, A=979-1217"/>
</dbReference>
<dbReference type="PDBsum" id="6WG3"/>
<dbReference type="PDBsum" id="6WG4"/>
<dbReference type="PDBsum" id="6WG6"/>
<dbReference type="PDBsum" id="6WGE"/>
<dbReference type="PDBsum" id="7W1M"/>
<dbReference type="PDBsum" id="8P0A"/>
<dbReference type="PDBsum" id="8PQ5"/>
<dbReference type="PDBsum" id="8ROH"/>
<dbReference type="PDBsum" id="8ROI"/>
<dbReference type="PDBsum" id="8ROJ"/>
<dbReference type="PDBsum" id="8ROK"/>
<dbReference type="PDBsum" id="8ROL"/>
<dbReference type="EMDB" id="EMD-17331"/>
<dbReference type="EMDB" id="EMD-17820"/>
<dbReference type="EMDB" id="EMD-21658"/>
<dbReference type="EMDB" id="EMD-21663"/>
<dbReference type="EMDB" id="EMD-32252"/>
<dbReference type="EMDB" id="EMD-4029"/>
<dbReference type="EMDB" id="EMD-4030"/>
<dbReference type="EMDB" id="EMD-4031"/>
<dbReference type="SMR" id="Q9UQE7"/>
<dbReference type="BioGRID" id="114574">
    <property type="interactions" value="422"/>
</dbReference>
<dbReference type="ComplexPortal" id="CPX-5989">
    <property type="entry name" value="Nuclear mitotic cohesin complex, STAG1 variant"/>
</dbReference>
<dbReference type="ComplexPortal" id="CPX-5991">
    <property type="entry name" value="Nuclear mitotic cohesin complex, STAG2 variant"/>
</dbReference>
<dbReference type="ComplexPortal" id="CPX-6082">
    <property type="entry name" value="Nuclear meiotic cohesin complex, RAD21 variant"/>
</dbReference>
<dbReference type="ComplexPortal" id="CPX-7441">
    <property type="entry name" value="Nuclear meiotic cohesin complex, RAD21L1 variant"/>
</dbReference>
<dbReference type="ComplexPortal" id="CPX-7442">
    <property type="entry name" value="Nuclear meiotic cohesin complex, REC8 variant"/>
</dbReference>
<dbReference type="CORUM" id="Q9UQE7"/>
<dbReference type="DIP" id="DIP-29200N"/>
<dbReference type="FunCoup" id="Q9UQE7">
    <property type="interactions" value="4227"/>
</dbReference>
<dbReference type="IntAct" id="Q9UQE7">
    <property type="interactions" value="158"/>
</dbReference>
<dbReference type="MINT" id="Q9UQE7"/>
<dbReference type="STRING" id="9606.ENSP00000354720"/>
<dbReference type="MoonDB" id="Q9UQE7">
    <property type="type" value="Curated"/>
</dbReference>
<dbReference type="GlyCosmos" id="Q9UQE7">
    <property type="glycosylation" value="2 sites, 1 glycan"/>
</dbReference>
<dbReference type="GlyGen" id="Q9UQE7">
    <property type="glycosylation" value="2 sites, 1 O-linked glycan (2 sites)"/>
</dbReference>
<dbReference type="iPTMnet" id="Q9UQE7"/>
<dbReference type="MetOSite" id="Q9UQE7"/>
<dbReference type="PhosphoSitePlus" id="Q9UQE7"/>
<dbReference type="SwissPalm" id="Q9UQE7"/>
<dbReference type="BioMuta" id="SMC3"/>
<dbReference type="DMDM" id="29337005"/>
<dbReference type="CPTAC" id="CPTAC-1006"/>
<dbReference type="jPOST" id="Q9UQE7"/>
<dbReference type="MassIVE" id="Q9UQE7"/>
<dbReference type="PaxDb" id="9606-ENSP00000354720"/>
<dbReference type="PeptideAtlas" id="Q9UQE7"/>
<dbReference type="ProteomicsDB" id="85549"/>
<dbReference type="Pumba" id="Q9UQE7"/>
<dbReference type="Antibodypedia" id="18357">
    <property type="antibodies" value="359 antibodies from 39 providers"/>
</dbReference>
<dbReference type="DNASU" id="9126"/>
<dbReference type="Ensembl" id="ENST00000361804.5">
    <property type="protein sequence ID" value="ENSP00000354720.5"/>
    <property type="gene ID" value="ENSG00000108055.11"/>
</dbReference>
<dbReference type="GeneID" id="9126"/>
<dbReference type="KEGG" id="hsa:9126"/>
<dbReference type="MANE-Select" id="ENST00000361804.5">
    <property type="protein sequence ID" value="ENSP00000354720.5"/>
    <property type="RefSeq nucleotide sequence ID" value="NM_005445.4"/>
    <property type="RefSeq protein sequence ID" value="NP_005436.1"/>
</dbReference>
<dbReference type="UCSC" id="uc001kze.4">
    <property type="organism name" value="human"/>
</dbReference>
<dbReference type="AGR" id="HGNC:2468"/>
<dbReference type="CTD" id="9126"/>
<dbReference type="DisGeNET" id="9126"/>
<dbReference type="GeneCards" id="SMC3"/>
<dbReference type="GeneReviews" id="SMC3"/>
<dbReference type="HGNC" id="HGNC:2468">
    <property type="gene designation" value="SMC3"/>
</dbReference>
<dbReference type="HPA" id="ENSG00000108055">
    <property type="expression patterns" value="Low tissue specificity"/>
</dbReference>
<dbReference type="MalaCards" id="SMC3"/>
<dbReference type="MIM" id="606062">
    <property type="type" value="gene"/>
</dbReference>
<dbReference type="MIM" id="610759">
    <property type="type" value="phenotype"/>
</dbReference>
<dbReference type="neXtProt" id="NX_Q9UQE7"/>
<dbReference type="OpenTargets" id="ENSG00000108055"/>
<dbReference type="Orphanet" id="199">
    <property type="disease" value="Cornelia de Lange syndrome"/>
</dbReference>
<dbReference type="PharmGKB" id="PA26966"/>
<dbReference type="VEuPathDB" id="HostDB:ENSG00000108055"/>
<dbReference type="eggNOG" id="KOG0964">
    <property type="taxonomic scope" value="Eukaryota"/>
</dbReference>
<dbReference type="GeneTree" id="ENSGT00580000081628"/>
<dbReference type="HOGENOM" id="CLU_001042_5_0_1"/>
<dbReference type="InParanoid" id="Q9UQE7"/>
<dbReference type="OMA" id="GQKTVCA"/>
<dbReference type="OrthoDB" id="431497at2759"/>
<dbReference type="PAN-GO" id="Q9UQE7">
    <property type="GO annotations" value="4 GO annotations based on evolutionary models"/>
</dbReference>
<dbReference type="PhylomeDB" id="Q9UQE7"/>
<dbReference type="TreeFam" id="TF105602"/>
<dbReference type="PathwayCommons" id="Q9UQE7"/>
<dbReference type="Reactome" id="R-HSA-1221632">
    <property type="pathway name" value="Meiotic synapsis"/>
</dbReference>
<dbReference type="Reactome" id="R-HSA-2467813">
    <property type="pathway name" value="Separation of Sister Chromatids"/>
</dbReference>
<dbReference type="Reactome" id="R-HSA-2468052">
    <property type="pathway name" value="Establishment of Sister Chromatid Cohesion"/>
</dbReference>
<dbReference type="Reactome" id="R-HSA-2470946">
    <property type="pathway name" value="Cohesin Loading onto Chromatin"/>
</dbReference>
<dbReference type="Reactome" id="R-HSA-2500257">
    <property type="pathway name" value="Resolution of Sister Chromatid Cohesion"/>
</dbReference>
<dbReference type="Reactome" id="R-HSA-3108214">
    <property type="pathway name" value="SUMOylation of DNA damage response and repair proteins"/>
</dbReference>
<dbReference type="Reactome" id="R-HSA-9018519">
    <property type="pathway name" value="Estrogen-dependent gene expression"/>
</dbReference>
<dbReference type="SignaLink" id="Q9UQE7"/>
<dbReference type="SIGNOR" id="Q9UQE7"/>
<dbReference type="BioGRID-ORCS" id="9126">
    <property type="hits" value="749 hits in 1140 CRISPR screens"/>
</dbReference>
<dbReference type="CD-CODE" id="232F8A39">
    <property type="entry name" value="P-body"/>
</dbReference>
<dbReference type="CD-CODE" id="8C2F96ED">
    <property type="entry name" value="Centrosome"/>
</dbReference>
<dbReference type="CD-CODE" id="91857CE7">
    <property type="entry name" value="Nucleolus"/>
</dbReference>
<dbReference type="ChiTaRS" id="SMC3">
    <property type="organism name" value="human"/>
</dbReference>
<dbReference type="GeneWiki" id="SMC3"/>
<dbReference type="GenomeRNAi" id="9126"/>
<dbReference type="Pharos" id="Q9UQE7">
    <property type="development level" value="Tbio"/>
</dbReference>
<dbReference type="PRO" id="PR:Q9UQE7"/>
<dbReference type="Proteomes" id="UP000005640">
    <property type="component" value="Chromosome 10"/>
</dbReference>
<dbReference type="RNAct" id="Q9UQE7">
    <property type="molecule type" value="protein"/>
</dbReference>
<dbReference type="Bgee" id="ENSG00000108055">
    <property type="expression patterns" value="Expressed in tendon of biceps brachii and 195 other cell types or tissues"/>
</dbReference>
<dbReference type="GO" id="GO:0000785">
    <property type="term" value="C:chromatin"/>
    <property type="evidence" value="ECO:0000314"/>
    <property type="project" value="UniProtKB"/>
</dbReference>
<dbReference type="GO" id="GO:0005694">
    <property type="term" value="C:chromosome"/>
    <property type="evidence" value="ECO:0000304"/>
    <property type="project" value="Reactome"/>
</dbReference>
<dbReference type="GO" id="GO:0000775">
    <property type="term" value="C:chromosome, centromeric region"/>
    <property type="evidence" value="ECO:0000304"/>
    <property type="project" value="Reactome"/>
</dbReference>
<dbReference type="GO" id="GO:0008278">
    <property type="term" value="C:cohesin complex"/>
    <property type="evidence" value="ECO:0000314"/>
    <property type="project" value="UniProtKB"/>
</dbReference>
<dbReference type="GO" id="GO:0005829">
    <property type="term" value="C:cytosol"/>
    <property type="evidence" value="ECO:0000304"/>
    <property type="project" value="Reactome"/>
</dbReference>
<dbReference type="GO" id="GO:0000800">
    <property type="term" value="C:lateral element"/>
    <property type="evidence" value="ECO:0007669"/>
    <property type="project" value="Ensembl"/>
</dbReference>
<dbReference type="GO" id="GO:0030893">
    <property type="term" value="C:meiotic cohesin complex"/>
    <property type="evidence" value="ECO:0000314"/>
    <property type="project" value="UniProtKB"/>
</dbReference>
<dbReference type="GO" id="GO:0030892">
    <property type="term" value="C:mitotic cohesin complex"/>
    <property type="evidence" value="ECO:0000353"/>
    <property type="project" value="ComplexPortal"/>
</dbReference>
<dbReference type="GO" id="GO:0097431">
    <property type="term" value="C:mitotic spindle pole"/>
    <property type="evidence" value="ECO:0000314"/>
    <property type="project" value="UniProtKB"/>
</dbReference>
<dbReference type="GO" id="GO:0016363">
    <property type="term" value="C:nuclear matrix"/>
    <property type="evidence" value="ECO:0000314"/>
    <property type="project" value="UniProtKB"/>
</dbReference>
<dbReference type="GO" id="GO:0005654">
    <property type="term" value="C:nucleoplasm"/>
    <property type="evidence" value="ECO:0000314"/>
    <property type="project" value="HPA"/>
</dbReference>
<dbReference type="GO" id="GO:0005634">
    <property type="term" value="C:nucleus"/>
    <property type="evidence" value="ECO:0000303"/>
    <property type="project" value="ComplexPortal"/>
</dbReference>
<dbReference type="GO" id="GO:0005524">
    <property type="term" value="F:ATP binding"/>
    <property type="evidence" value="ECO:0007669"/>
    <property type="project" value="UniProtKB-KW"/>
</dbReference>
<dbReference type="GO" id="GO:0016887">
    <property type="term" value="F:ATP hydrolysis activity"/>
    <property type="evidence" value="ECO:0007669"/>
    <property type="project" value="InterPro"/>
</dbReference>
<dbReference type="GO" id="GO:0048487">
    <property type="term" value="F:beta-tubulin binding"/>
    <property type="evidence" value="ECO:0000314"/>
    <property type="project" value="UniProtKB"/>
</dbReference>
<dbReference type="GO" id="GO:0003682">
    <property type="term" value="F:chromatin binding"/>
    <property type="evidence" value="ECO:0007669"/>
    <property type="project" value="Ensembl"/>
</dbReference>
<dbReference type="GO" id="GO:0000987">
    <property type="term" value="F:cis-regulatory region sequence-specific DNA binding"/>
    <property type="evidence" value="ECO:0007669"/>
    <property type="project" value="Ensembl"/>
</dbReference>
<dbReference type="GO" id="GO:0003690">
    <property type="term" value="F:double-stranded DNA binding"/>
    <property type="evidence" value="ECO:0000318"/>
    <property type="project" value="GO_Central"/>
</dbReference>
<dbReference type="GO" id="GO:0070840">
    <property type="term" value="F:dynein complex binding"/>
    <property type="evidence" value="ECO:0000314"/>
    <property type="project" value="UniProtKB"/>
</dbReference>
<dbReference type="GO" id="GO:0036033">
    <property type="term" value="F:mediator complex binding"/>
    <property type="evidence" value="ECO:0007669"/>
    <property type="project" value="Ensembl"/>
</dbReference>
<dbReference type="GO" id="GO:0003777">
    <property type="term" value="F:microtubule motor activity"/>
    <property type="evidence" value="ECO:0000303"/>
    <property type="project" value="UniProtKB"/>
</dbReference>
<dbReference type="GO" id="GO:0046982">
    <property type="term" value="F:protein heterodimerization activity"/>
    <property type="evidence" value="ECO:0000353"/>
    <property type="project" value="UniProtKB"/>
</dbReference>
<dbReference type="GO" id="GO:0051301">
    <property type="term" value="P:cell division"/>
    <property type="evidence" value="ECO:0007669"/>
    <property type="project" value="UniProtKB-KW"/>
</dbReference>
<dbReference type="GO" id="GO:0006281">
    <property type="term" value="P:DNA repair"/>
    <property type="evidence" value="ECO:0007669"/>
    <property type="project" value="UniProtKB-KW"/>
</dbReference>
<dbReference type="GO" id="GO:0034089">
    <property type="term" value="P:establishment of meiotic sister chromatid cohesion"/>
    <property type="evidence" value="ECO:0000303"/>
    <property type="project" value="ComplexPortal"/>
</dbReference>
<dbReference type="GO" id="GO:0034087">
    <property type="term" value="P:establishment of mitotic sister chromatid cohesion"/>
    <property type="evidence" value="ECO:0000303"/>
    <property type="project" value="ComplexPortal"/>
</dbReference>
<dbReference type="GO" id="GO:0051321">
    <property type="term" value="P:meiotic cell cycle"/>
    <property type="evidence" value="ECO:0000314"/>
    <property type="project" value="UniProtKB"/>
</dbReference>
<dbReference type="GO" id="GO:0000278">
    <property type="term" value="P:mitotic cell cycle"/>
    <property type="evidence" value="ECO:0000304"/>
    <property type="project" value="ProtInc"/>
</dbReference>
<dbReference type="GO" id="GO:0007064">
    <property type="term" value="P:mitotic sister chromatid cohesion"/>
    <property type="evidence" value="ECO:0000318"/>
    <property type="project" value="GO_Central"/>
</dbReference>
<dbReference type="GO" id="GO:0090307">
    <property type="term" value="P:mitotic spindle assembly"/>
    <property type="evidence" value="ECO:0000315"/>
    <property type="project" value="UniProtKB"/>
</dbReference>
<dbReference type="GO" id="GO:0006275">
    <property type="term" value="P:regulation of DNA replication"/>
    <property type="evidence" value="ECO:0000315"/>
    <property type="project" value="UniProtKB"/>
</dbReference>
<dbReference type="GO" id="GO:0007062">
    <property type="term" value="P:sister chromatid cohesion"/>
    <property type="evidence" value="ECO:0000315"/>
    <property type="project" value="BHF-UCL"/>
</dbReference>
<dbReference type="GO" id="GO:0019827">
    <property type="term" value="P:stem cell population maintenance"/>
    <property type="evidence" value="ECO:0007669"/>
    <property type="project" value="Ensembl"/>
</dbReference>
<dbReference type="CDD" id="cd03272">
    <property type="entry name" value="ABC_SMC3_euk"/>
    <property type="match status" value="1"/>
</dbReference>
<dbReference type="FunFam" id="1.20.1060.20:FF:000002">
    <property type="entry name" value="Structural maintenance of chromosomes 3"/>
    <property type="match status" value="1"/>
</dbReference>
<dbReference type="FunFam" id="3.30.70.1620:FF:000002">
    <property type="entry name" value="Structural maintenance of chromosomes 3"/>
    <property type="match status" value="1"/>
</dbReference>
<dbReference type="FunFam" id="3.40.50.300:FF:000370">
    <property type="entry name" value="Structural maintenance of chromosomes 3"/>
    <property type="match status" value="1"/>
</dbReference>
<dbReference type="FunFam" id="3.40.50.300:FF:000424">
    <property type="entry name" value="Structural maintenance of chromosomes 3"/>
    <property type="match status" value="1"/>
</dbReference>
<dbReference type="Gene3D" id="1.10.287.1490">
    <property type="match status" value="1"/>
</dbReference>
<dbReference type="Gene3D" id="1.20.1060.20">
    <property type="match status" value="1"/>
</dbReference>
<dbReference type="Gene3D" id="3.30.70.1620">
    <property type="match status" value="1"/>
</dbReference>
<dbReference type="Gene3D" id="3.40.50.300">
    <property type="entry name" value="P-loop containing nucleotide triphosphate hydrolases"/>
    <property type="match status" value="2"/>
</dbReference>
<dbReference type="InterPro" id="IPR027417">
    <property type="entry name" value="P-loop_NTPase"/>
</dbReference>
<dbReference type="InterPro" id="IPR003395">
    <property type="entry name" value="RecF/RecN/SMC_N"/>
</dbReference>
<dbReference type="InterPro" id="IPR024704">
    <property type="entry name" value="SMC"/>
</dbReference>
<dbReference type="InterPro" id="IPR041741">
    <property type="entry name" value="SMC3_ABC_euk"/>
</dbReference>
<dbReference type="InterPro" id="IPR010935">
    <property type="entry name" value="SMC_hinge"/>
</dbReference>
<dbReference type="InterPro" id="IPR036277">
    <property type="entry name" value="SMC_hinge_sf"/>
</dbReference>
<dbReference type="PANTHER" id="PTHR43977">
    <property type="entry name" value="STRUCTURAL MAINTENANCE OF CHROMOSOMES PROTEIN 3"/>
    <property type="match status" value="1"/>
</dbReference>
<dbReference type="Pfam" id="PF06470">
    <property type="entry name" value="SMC_hinge"/>
    <property type="match status" value="1"/>
</dbReference>
<dbReference type="Pfam" id="PF02463">
    <property type="entry name" value="SMC_N"/>
    <property type="match status" value="1"/>
</dbReference>
<dbReference type="PIRSF" id="PIRSF005719">
    <property type="entry name" value="SMC"/>
    <property type="match status" value="1"/>
</dbReference>
<dbReference type="SMART" id="SM00968">
    <property type="entry name" value="SMC_hinge"/>
    <property type="match status" value="1"/>
</dbReference>
<dbReference type="SUPFAM" id="SSF52540">
    <property type="entry name" value="P-loop containing nucleoside triphosphate hydrolases"/>
    <property type="match status" value="1"/>
</dbReference>
<dbReference type="SUPFAM" id="SSF75553">
    <property type="entry name" value="Smc hinge domain"/>
    <property type="match status" value="1"/>
</dbReference>
<gene>
    <name type="primary">SMC3</name>
    <name type="synonym">BAM</name>
    <name type="synonym">BMH</name>
    <name type="synonym">CSPG6</name>
    <name type="synonym">SMC3L1</name>
</gene>
<organism>
    <name type="scientific">Homo sapiens</name>
    <name type="common">Human</name>
    <dbReference type="NCBI Taxonomy" id="9606"/>
    <lineage>
        <taxon>Eukaryota</taxon>
        <taxon>Metazoa</taxon>
        <taxon>Chordata</taxon>
        <taxon>Craniata</taxon>
        <taxon>Vertebrata</taxon>
        <taxon>Euteleostomi</taxon>
        <taxon>Mammalia</taxon>
        <taxon>Eutheria</taxon>
        <taxon>Euarchontoglires</taxon>
        <taxon>Primates</taxon>
        <taxon>Haplorrhini</taxon>
        <taxon>Catarrhini</taxon>
        <taxon>Hominidae</taxon>
        <taxon>Homo</taxon>
    </lineage>
</organism>
<feature type="chain" id="PRO_0000119001" description="Structural maintenance of chromosomes protein 3">
    <location>
        <begin position="1"/>
        <end position="1217"/>
    </location>
</feature>
<feature type="domain" description="SMC hinge">
    <location>
        <begin position="530"/>
        <end position="642"/>
    </location>
</feature>
<feature type="region of interest" description="Disordered" evidence="6">
    <location>
        <begin position="242"/>
        <end position="268"/>
    </location>
</feature>
<feature type="region of interest" description="Disordered" evidence="6">
    <location>
        <begin position="1059"/>
        <end position="1090"/>
    </location>
</feature>
<feature type="coiled-coil region" evidence="5">
    <location>
        <begin position="179"/>
        <end position="350"/>
    </location>
</feature>
<feature type="coiled-coil region" evidence="5">
    <location>
        <begin position="393"/>
        <end position="503"/>
    </location>
</feature>
<feature type="coiled-coil region" evidence="5">
    <location>
        <begin position="669"/>
        <end position="916"/>
    </location>
</feature>
<feature type="coiled-coil region" evidence="5">
    <location>
        <begin position="958"/>
        <end position="989"/>
    </location>
</feature>
<feature type="binding site" evidence="5">
    <location>
        <begin position="32"/>
        <end position="39"/>
    </location>
    <ligand>
        <name>ATP</name>
        <dbReference type="ChEBI" id="CHEBI:30616"/>
    </ligand>
</feature>
<feature type="modified residue" description="N6-acetyllysine" evidence="14 16 30">
    <location>
        <position position="105"/>
    </location>
</feature>
<feature type="modified residue" description="N6-acetyllysine" evidence="14 16 30">
    <location>
        <position position="106"/>
    </location>
</feature>
<feature type="modified residue" description="N6-acetyllysine" evidence="30">
    <location>
        <position position="140"/>
    </location>
</feature>
<feature type="modified residue" description="Phosphothreonine" evidence="31">
    <location>
        <position position="783"/>
    </location>
</feature>
<feature type="modified residue" description="Phosphoserine" evidence="28 31">
    <location>
        <position position="787"/>
    </location>
</feature>
<feature type="modified residue" description="Phosphoserine" evidence="33">
    <location>
        <position position="886"/>
    </location>
</feature>
<feature type="modified residue" description="Phosphoserine" evidence="4">
    <location>
        <position position="1013"/>
    </location>
</feature>
<feature type="modified residue" description="Phosphoserine" evidence="28 29 34">
    <location>
        <position position="1065"/>
    </location>
</feature>
<feature type="modified residue" description="Phosphoserine" evidence="28 29 31 32 33 34">
    <location>
        <position position="1067"/>
    </location>
</feature>
<feature type="modified residue" description="Phosphoserine" evidence="3">
    <location>
        <position position="1074"/>
    </location>
</feature>
<feature type="modified residue" description="Phosphoserine" evidence="31 32">
    <location>
        <position position="1083"/>
    </location>
</feature>
<feature type="modified residue" description="N6-acetyllysine" evidence="30">
    <location>
        <position position="1190"/>
    </location>
</feature>
<feature type="sequence variant" id="VAR_083979" description="In CDLS3." evidence="19">
    <location>
        <begin position="380"/>
        <end position="384"/>
    </location>
</feature>
<feature type="sequence variant" id="VAR_032845" description="In CDLS3; affects the affinity of SMC hinge dimers for DNA; mutated hinge dimers bind DNA with higher affinity than wild-type proteins." evidence="13 15">
    <location>
        <position position="491"/>
    </location>
</feature>
<feature type="mutagenesis site" description="20% loss of sister chromatid cohesion, no effect on cohesin complex assembly; when associated with A-106." evidence="14 16">
    <original>K</original>
    <variation>A</variation>
    <location>
        <position position="105"/>
    </location>
</feature>
<feature type="mutagenesis site" description="No effect on sister chromatid cohesion, nor on cohesin complex assembly; when associated with Q-106." evidence="14">
    <original>K</original>
    <variation>Q</variation>
    <location>
        <position position="105"/>
    </location>
</feature>
<feature type="mutagenesis site" description="Stabilizes interaction with PDS5A and WAPL; when associated with R-106." evidence="16">
    <original>K</original>
    <variation>R</variation>
    <location>
        <position position="105"/>
    </location>
</feature>
<feature type="mutagenesis site" description="20% loss of sister chromatid cohesion, no effect on cohesin complex assembly; when associated with A-105." evidence="14 16">
    <original>K</original>
    <variation>A</variation>
    <location>
        <position position="106"/>
    </location>
</feature>
<feature type="mutagenesis site" description="No effect on sister chromatid cohesion, nor on cohesin complex assembly; when associated with Q-105." evidence="14">
    <original>K</original>
    <variation>Q</variation>
    <location>
        <position position="106"/>
    </location>
</feature>
<feature type="mutagenesis site" description="Stabilizes interaction with PDS5A and WAPL; when associated with R-105." evidence="16">
    <original>K</original>
    <variation>R</variation>
    <location>
        <position position="106"/>
    </location>
</feature>
<feature type="sequence conflict" description="In Ref. 5; AAD32447." evidence="23" ref="5">
    <original>K</original>
    <variation>T</variation>
    <location>
        <position position="462"/>
    </location>
</feature>
<feature type="sequence conflict" description="In Ref. 5; AAD32447." evidence="23" ref="5">
    <original>I</original>
    <variation>V</variation>
    <location>
        <position position="509"/>
    </location>
</feature>
<feature type="sequence conflict" description="In Ref. 5; AAD32447." evidence="23" ref="5">
    <original>Q</original>
    <variation>P</variation>
    <location>
        <position position="526"/>
    </location>
</feature>
<feature type="strand" evidence="39">
    <location>
        <begin position="2"/>
        <end position="11"/>
    </location>
</feature>
<feature type="strand" evidence="38">
    <location>
        <begin position="18"/>
        <end position="20"/>
    </location>
</feature>
<feature type="strand" evidence="39">
    <location>
        <begin position="25"/>
        <end position="31"/>
    </location>
</feature>
<feature type="helix" evidence="39">
    <location>
        <begin position="38"/>
        <end position="47"/>
    </location>
</feature>
<feature type="helix" evidence="36">
    <location>
        <begin position="51"/>
        <end position="53"/>
    </location>
</feature>
<feature type="helix" evidence="36">
    <location>
        <begin position="58"/>
        <end position="63"/>
    </location>
</feature>
<feature type="strand" evidence="36">
    <location>
        <begin position="68"/>
        <end position="71"/>
    </location>
</feature>
<feature type="strand" evidence="36">
    <location>
        <begin position="75"/>
        <end position="83"/>
    </location>
</feature>
<feature type="strand" evidence="36">
    <location>
        <begin position="89"/>
        <end position="92"/>
    </location>
</feature>
<feature type="strand" evidence="36">
    <location>
        <begin position="94"/>
        <end position="105"/>
    </location>
</feature>
<feature type="strand" evidence="36">
    <location>
        <begin position="107"/>
        <end position="111"/>
    </location>
</feature>
<feature type="strand" evidence="36">
    <location>
        <begin position="114"/>
        <end position="116"/>
    </location>
</feature>
<feature type="helix" evidence="36">
    <location>
        <begin position="118"/>
        <end position="126"/>
    </location>
</feature>
<feature type="turn" evidence="36">
    <location>
        <begin position="127"/>
        <end position="129"/>
    </location>
</feature>
<feature type="strand" evidence="36">
    <location>
        <begin position="137"/>
        <end position="140"/>
    </location>
</feature>
<feature type="helix" evidence="36">
    <location>
        <begin position="141"/>
        <end position="148"/>
    </location>
</feature>
<feature type="helix" evidence="36">
    <location>
        <begin position="152"/>
        <end position="163"/>
    </location>
</feature>
<feature type="helix" evidence="36">
    <location>
        <begin position="165"/>
        <end position="179"/>
    </location>
</feature>
<feature type="helix" evidence="37">
    <location>
        <begin position="201"/>
        <end position="204"/>
    </location>
</feature>
<feature type="helix" evidence="35">
    <location>
        <begin position="501"/>
        <end position="522"/>
    </location>
</feature>
<feature type="helix" evidence="35">
    <location>
        <begin position="526"/>
        <end position="531"/>
    </location>
</feature>
<feature type="strand" evidence="35">
    <location>
        <begin position="532"/>
        <end position="535"/>
    </location>
</feature>
<feature type="helix" evidence="35">
    <location>
        <begin position="536"/>
        <end position="539"/>
    </location>
</feature>
<feature type="helix" evidence="35">
    <location>
        <begin position="544"/>
        <end position="546"/>
    </location>
</feature>
<feature type="helix" evidence="35">
    <location>
        <begin position="547"/>
        <end position="554"/>
    </location>
</feature>
<feature type="helix" evidence="35">
    <location>
        <begin position="555"/>
        <end position="559"/>
    </location>
</feature>
<feature type="strand" evidence="35">
    <location>
        <begin position="561"/>
        <end position="564"/>
    </location>
</feature>
<feature type="helix" evidence="35">
    <location>
        <begin position="566"/>
        <end position="578"/>
    </location>
</feature>
<feature type="strand" evidence="35">
    <location>
        <begin position="585"/>
        <end position="589"/>
    </location>
</feature>
<feature type="turn" evidence="35">
    <location>
        <begin position="590"/>
        <end position="592"/>
    </location>
</feature>
<feature type="strand" evidence="35">
    <location>
        <begin position="604"/>
        <end position="608"/>
    </location>
</feature>
<feature type="helix" evidence="35">
    <location>
        <begin position="609"/>
        <end position="612"/>
    </location>
</feature>
<feature type="helix" evidence="35">
    <location>
        <begin position="617"/>
        <end position="619"/>
    </location>
</feature>
<feature type="helix" evidence="35">
    <location>
        <begin position="620"/>
        <end position="627"/>
    </location>
</feature>
<feature type="strand" evidence="35">
    <location>
        <begin position="630"/>
        <end position="634"/>
    </location>
</feature>
<feature type="helix" evidence="35">
    <location>
        <begin position="636"/>
        <end position="645"/>
    </location>
</feature>
<feature type="strand" evidence="35">
    <location>
        <begin position="649"/>
        <end position="652"/>
    </location>
</feature>
<feature type="strand" evidence="35">
    <location>
        <begin position="660"/>
        <end position="662"/>
    </location>
</feature>
<feature type="helix" evidence="39">
    <location>
        <begin position="802"/>
        <end position="804"/>
    </location>
</feature>
<feature type="helix" evidence="39">
    <location>
        <begin position="809"/>
        <end position="814"/>
    </location>
</feature>
<feature type="strand" evidence="39">
    <location>
        <begin position="819"/>
        <end position="821"/>
    </location>
</feature>
<feature type="strand" evidence="39">
    <location>
        <begin position="825"/>
        <end position="833"/>
    </location>
</feature>
<feature type="strand" evidence="39">
    <location>
        <begin position="843"/>
        <end position="852"/>
    </location>
</feature>
<feature type="strand" evidence="39">
    <location>
        <begin position="858"/>
        <end position="862"/>
    </location>
</feature>
<feature type="strand" evidence="39">
    <location>
        <begin position="864"/>
        <end position="868"/>
    </location>
</feature>
<feature type="strand" evidence="39">
    <location>
        <begin position="871"/>
        <end position="873"/>
    </location>
</feature>
<feature type="helix" evidence="39">
    <location>
        <begin position="874"/>
        <end position="882"/>
    </location>
</feature>
<feature type="strand" evidence="39">
    <location>
        <begin position="892"/>
        <end position="895"/>
    </location>
</feature>
<feature type="helix" evidence="39">
    <location>
        <begin position="896"/>
        <end position="902"/>
    </location>
</feature>
<feature type="helix" evidence="39">
    <location>
        <begin position="906"/>
        <end position="917"/>
    </location>
</feature>
<feature type="helix" evidence="39">
    <location>
        <begin position="919"/>
        <end position="944"/>
    </location>
</feature>
<feature type="helix" evidence="39">
    <location>
        <begin position="945"/>
        <end position="948"/>
    </location>
</feature>
<feature type="helix" evidence="36">
    <location>
        <begin position="950"/>
        <end position="956"/>
    </location>
</feature>
<feature type="helix" evidence="37">
    <location>
        <begin position="984"/>
        <end position="988"/>
    </location>
</feature>
<feature type="helix" evidence="39">
    <location>
        <begin position="995"/>
        <end position="1047"/>
    </location>
</feature>
<feature type="strand" evidence="37">
    <location>
        <begin position="1048"/>
        <end position="1050"/>
    </location>
</feature>
<feature type="strand" evidence="39">
    <location>
        <begin position="1052"/>
        <end position="1057"/>
    </location>
</feature>
<feature type="strand" evidence="39">
    <location>
        <begin position="1096"/>
        <end position="1103"/>
    </location>
</feature>
<feature type="strand" evidence="39">
    <location>
        <begin position="1105"/>
        <end position="1107"/>
    </location>
</feature>
<feature type="helix" evidence="39">
    <location>
        <begin position="1112"/>
        <end position="1114"/>
    </location>
</feature>
<feature type="helix" evidence="39">
    <location>
        <begin position="1117"/>
        <end position="1132"/>
    </location>
</feature>
<feature type="strand" evidence="39">
    <location>
        <begin position="1138"/>
        <end position="1144"/>
    </location>
</feature>
<feature type="turn" evidence="37">
    <location>
        <begin position="1145"/>
        <end position="1148"/>
    </location>
</feature>
<feature type="helix" evidence="39">
    <location>
        <begin position="1151"/>
        <end position="1164"/>
    </location>
</feature>
<feature type="turn" evidence="39">
    <location>
        <begin position="1165"/>
        <end position="1167"/>
    </location>
</feature>
<feature type="strand" evidence="39">
    <location>
        <begin position="1168"/>
        <end position="1173"/>
    </location>
</feature>
<feature type="strand" evidence="39">
    <location>
        <begin position="1175"/>
        <end position="1177"/>
    </location>
</feature>
<feature type="helix" evidence="39">
    <location>
        <begin position="1180"/>
        <end position="1182"/>
    </location>
</feature>
<feature type="strand" evidence="39">
    <location>
        <begin position="1184"/>
        <end position="1192"/>
    </location>
</feature>
<feature type="strand" evidence="39">
    <location>
        <begin position="1195"/>
        <end position="1201"/>
    </location>
</feature>
<feature type="helix" evidence="39">
    <location>
        <begin position="1203"/>
        <end position="1210"/>
    </location>
</feature>
<protein>
    <recommendedName>
        <fullName>Structural maintenance of chromosomes protein 3</fullName>
        <shortName>SMC protein 3</shortName>
        <shortName>SMC-3</shortName>
    </recommendedName>
    <alternativeName>
        <fullName>Basement membrane-associated chondroitin proteoglycan</fullName>
        <shortName>Bamacan</shortName>
    </alternativeName>
    <alternativeName>
        <fullName>Chondroitin sulfate proteoglycan 6</fullName>
    </alternativeName>
    <alternativeName>
        <fullName>Chromosome-associated polypeptide</fullName>
        <shortName>hCAP</shortName>
    </alternativeName>
</protein>